<name>GRLP_DICDI</name>
<evidence type="ECO:0000255" key="1"/>
<evidence type="ECO:0000256" key="2">
    <source>
        <dbReference type="SAM" id="MobiDB-lite"/>
    </source>
</evidence>
<evidence type="ECO:0000269" key="3">
    <source>
    </source>
</evidence>
<evidence type="ECO:0000305" key="4"/>
<organism>
    <name type="scientific">Dictyostelium discoideum</name>
    <name type="common">Social amoeba</name>
    <dbReference type="NCBI Taxonomy" id="44689"/>
    <lineage>
        <taxon>Eukaryota</taxon>
        <taxon>Amoebozoa</taxon>
        <taxon>Evosea</taxon>
        <taxon>Eumycetozoa</taxon>
        <taxon>Dictyostelia</taxon>
        <taxon>Dictyosteliales</taxon>
        <taxon>Dictyosteliaceae</taxon>
        <taxon>Dictyostelium</taxon>
    </lineage>
</organism>
<sequence>MKFKKKNIYWVSPTKGVESMGCGLVKEFPCKDIGSIIDKITPNVSTIINLMEGVYRGNFSYLMTNFVILFKGEGRDKTIIDLEGRQRFTLCTISDIHFKDLTIKNGFGNAISGIFDGGAIYAYDSQIHFVNVALIDNTCSASGGGIFLYNCYFNVEHSLFQNNTANSGGGFILLLSASNITNSSFLHNRVFQEGKGGAIQVFISFMSIELSLFAYNIAPYSGAIDMVGGNLTSKYSKFIENHSNIGGGFGLYFISNVIFESCEFIGNRANSTGGLSFLTAQSMLRFSLCIFKDNFAPNCGIVESHSISPLLFESCSFTGDVPTAVQIALYDNYCFLKVQNCHFSEIQGVLMYADSISNIIIDSSSFTNVSNRIIDVGNEADILIISSTFYNITIDEYLVSLSNGNFLAYNMDFNNNIVLALIKSSVGGSVTIVSSSMSNNYVSTSLISLSNGYSVYIENCEVKNNTGLFKGCFIDTDHTGSETIVQSLFENNRSPFGPILYFSNPETMLSTNYSSNFRDILFSNNFAAYSGALVYFSQNVSLPNISCTNCIYDNNTAVFGELVNSAFYSFNVSITPVIYPFQDLIIEIFALDFFGNLVRGTSDLGFFAIPCSDAYVEGNLFAVLNENGSAIFSNIKLSSNPNSICNLTFLSVPIVSENGPITIPITFSYCSQDRELVMIKSIYYCLKTIKVTSFVKFLVGTLAAILLIILIISGFISLKYRKKRVIRYSNPLFLCIILVGCIIFLITIPVLFGSTSATCKIRFPIIVIGSCLVTSSVFIKQFRIWRLIKDIQLLRETNVENKYLLKFISILMVIPIIIVICSFFIFPTHEKYTFNQRDITITHYCSDGSYLAYVIIFLVYQMAILLFGCYLVIVCRKFRSIPGTFNEATYIGILIYNYTVVLIVAIPLAYVFNKNPLANFLIFSISIIVFVLSTIILLFIPKFHFLLRKKVIISSLEKLIKEQEAIVQRNKDILYFYDMYLAEERTGIQQQQRQGNLYNNNSLGRSISSNTRKRSNNNINNNNNNNSFNMTGFSDSSSTISNPNLTSFTSSPSSLNSSSDSDSTPDFNDPNFLEYYNERVKNYGKRKSIEKNKINNSIPNSPKSTTSLPTSLPSSSSSSSSSSSSSSSSSSSSSSSSSITPKSNTPILSPSSQSSKTINKGGSGSGNSSSIPNYQNIKSPNTPKSNKSSPNLSIPVNKNSKVSKLSSNQISSPKSIKSDKSPITIKDFDNSSDLSDSSNSLKSDSSIGSEQFNEKVINRIFNIHQDKKVKTTKQQSDSTLSSIGSDSSPNFNENINNPNINPNNNNNPNNNNNNNNNNNNNNNNNNNINNNNNNANNNNSDTDDSSPNFNENIEKKNVVKTKTNFLNQFHQKKQKDSDNRKNYNISPINISDEKVPPLSPINLSKRK</sequence>
<keyword id="KW-0175">Coiled coil</keyword>
<keyword id="KW-0297">G-protein coupled receptor</keyword>
<keyword id="KW-0325">Glycoprotein</keyword>
<keyword id="KW-0472">Membrane</keyword>
<keyword id="KW-0675">Receptor</keyword>
<keyword id="KW-1185">Reference proteome</keyword>
<keyword id="KW-0677">Repeat</keyword>
<keyword id="KW-0807">Transducer</keyword>
<keyword id="KW-0812">Transmembrane</keyword>
<keyword id="KW-1133">Transmembrane helix</keyword>
<protein>
    <recommendedName>
        <fullName>Metabotropic glutamate receptor-like protein P</fullName>
    </recommendedName>
</protein>
<feature type="chain" id="PRO_0000370359" description="Metabotropic glutamate receptor-like protein P">
    <location>
        <begin position="1"/>
        <end position="1407"/>
    </location>
</feature>
<feature type="topological domain" description="Extracellular" evidence="1">
    <location>
        <begin position="1"/>
        <end position="696"/>
    </location>
</feature>
<feature type="transmembrane region" description="Helical; Name=1" evidence="1">
    <location>
        <begin position="697"/>
        <end position="717"/>
    </location>
</feature>
<feature type="topological domain" description="Cytoplasmic" evidence="1">
    <location>
        <begin position="718"/>
        <end position="731"/>
    </location>
</feature>
<feature type="transmembrane region" description="Helical; Name=2" evidence="1">
    <location>
        <begin position="732"/>
        <end position="752"/>
    </location>
</feature>
<feature type="topological domain" description="Extracellular" evidence="1">
    <location>
        <begin position="753"/>
        <end position="758"/>
    </location>
</feature>
<feature type="transmembrane region" description="Helical; Name=3" evidence="1">
    <location>
        <begin position="759"/>
        <end position="779"/>
    </location>
</feature>
<feature type="topological domain" description="Cytoplasmic" evidence="1">
    <location>
        <begin position="780"/>
        <end position="806"/>
    </location>
</feature>
<feature type="transmembrane region" description="Helical; Name=4" evidence="1">
    <location>
        <begin position="807"/>
        <end position="827"/>
    </location>
</feature>
<feature type="topological domain" description="Extracellular" evidence="1">
    <location>
        <begin position="828"/>
        <end position="853"/>
    </location>
</feature>
<feature type="transmembrane region" description="Helical; Name=5" evidence="1">
    <location>
        <begin position="854"/>
        <end position="874"/>
    </location>
</feature>
<feature type="topological domain" description="Cytoplasmic" evidence="1">
    <location>
        <begin position="875"/>
        <end position="890"/>
    </location>
</feature>
<feature type="transmembrane region" description="Helical; Name=6" evidence="1">
    <location>
        <begin position="891"/>
        <end position="911"/>
    </location>
</feature>
<feature type="topological domain" description="Extracellular" evidence="1">
    <location>
        <begin position="912"/>
        <end position="919"/>
    </location>
</feature>
<feature type="transmembrane region" description="Helical; Name=7" evidence="1">
    <location>
        <begin position="920"/>
        <end position="940"/>
    </location>
</feature>
<feature type="topological domain" description="Cytoplasmic" evidence="1">
    <location>
        <begin position="941"/>
        <end position="1407"/>
    </location>
</feature>
<feature type="repeat" description="PbH1 1">
    <location>
        <begin position="93"/>
        <end position="118"/>
    </location>
</feature>
<feature type="repeat" description="PbH1 2">
    <location>
        <begin position="129"/>
        <end position="150"/>
    </location>
</feature>
<feature type="repeat" description="PbH1 3">
    <location>
        <begin position="254"/>
        <end position="279"/>
    </location>
</feature>
<feature type="repeat" description="PbH1 4">
    <location>
        <begin position="452"/>
        <end position="476"/>
    </location>
</feature>
<feature type="region of interest" description="Disordered" evidence="2">
    <location>
        <begin position="991"/>
        <end position="1072"/>
    </location>
</feature>
<feature type="region of interest" description="Disordered" evidence="2">
    <location>
        <begin position="1084"/>
        <end position="1248"/>
    </location>
</feature>
<feature type="region of interest" description="Disordered" evidence="2">
    <location>
        <begin position="1267"/>
        <end position="1351"/>
    </location>
</feature>
<feature type="region of interest" description="Disordered" evidence="2">
    <location>
        <begin position="1369"/>
        <end position="1407"/>
    </location>
</feature>
<feature type="coiled-coil region" evidence="1">
    <location>
        <begin position="1315"/>
        <end position="1344"/>
    </location>
</feature>
<feature type="compositionally biased region" description="Polar residues" evidence="2">
    <location>
        <begin position="991"/>
        <end position="1004"/>
    </location>
</feature>
<feature type="compositionally biased region" description="Low complexity" evidence="2">
    <location>
        <begin position="1005"/>
        <end position="1029"/>
    </location>
</feature>
<feature type="compositionally biased region" description="Polar residues" evidence="2">
    <location>
        <begin position="1030"/>
        <end position="1040"/>
    </location>
</feature>
<feature type="compositionally biased region" description="Low complexity" evidence="2">
    <location>
        <begin position="1041"/>
        <end position="1071"/>
    </location>
</feature>
<feature type="compositionally biased region" description="Basic and acidic residues" evidence="2">
    <location>
        <begin position="1084"/>
        <end position="1093"/>
    </location>
</feature>
<feature type="compositionally biased region" description="Low complexity" evidence="2">
    <location>
        <begin position="1099"/>
        <end position="1147"/>
    </location>
</feature>
<feature type="compositionally biased region" description="Low complexity" evidence="2">
    <location>
        <begin position="1154"/>
        <end position="1246"/>
    </location>
</feature>
<feature type="compositionally biased region" description="Low complexity" evidence="2">
    <location>
        <begin position="1276"/>
        <end position="1339"/>
    </location>
</feature>
<feature type="glycosylation site" description="N-linked (GlcNAc...) asparagine" evidence="1">
    <location>
        <position position="43"/>
    </location>
</feature>
<feature type="glycosylation site" description="N-linked (GlcNAc...) asparagine" evidence="1">
    <location>
        <position position="58"/>
    </location>
</feature>
<feature type="glycosylation site" description="N-linked (GlcNAc...) asparagine" evidence="1">
    <location>
        <position position="162"/>
    </location>
</feature>
<feature type="glycosylation site" description="N-linked (GlcNAc...) asparagine" evidence="1">
    <location>
        <position position="179"/>
    </location>
</feature>
<feature type="glycosylation site" description="N-linked (GlcNAc...) asparagine" evidence="1">
    <location>
        <position position="182"/>
    </location>
</feature>
<feature type="glycosylation site" description="N-linked (GlcNAc...) asparagine" evidence="1">
    <location>
        <position position="230"/>
    </location>
</feature>
<feature type="glycosylation site" description="N-linked (GlcNAc...) asparagine" evidence="1">
    <location>
        <position position="241"/>
    </location>
</feature>
<feature type="glycosylation site" description="N-linked (GlcNAc...) asparagine" evidence="1">
    <location>
        <position position="270"/>
    </location>
</feature>
<feature type="glycosylation site" description="N-linked (GlcNAc...) asparagine" evidence="1">
    <location>
        <position position="368"/>
    </location>
</feature>
<feature type="glycosylation site" description="N-linked (GlcNAc...) asparagine" evidence="1">
    <location>
        <position position="391"/>
    </location>
</feature>
<feature type="glycosylation site" description="N-linked (GlcNAc...) asparagine" evidence="1">
    <location>
        <position position="464"/>
    </location>
</feature>
<feature type="glycosylation site" description="N-linked (GlcNAc...) asparagine" evidence="1">
    <location>
        <position position="512"/>
    </location>
</feature>
<feature type="glycosylation site" description="N-linked (GlcNAc...) asparagine" evidence="1">
    <location>
        <position position="539"/>
    </location>
</feature>
<feature type="glycosylation site" description="N-linked (GlcNAc...) asparagine" evidence="1">
    <location>
        <position position="544"/>
    </location>
</feature>
<feature type="glycosylation site" description="N-linked (GlcNAc...) asparagine" evidence="1">
    <location>
        <position position="554"/>
    </location>
</feature>
<feature type="glycosylation site" description="N-linked (GlcNAc...) asparagine" evidence="1">
    <location>
        <position position="571"/>
    </location>
</feature>
<feature type="glycosylation site" description="N-linked (GlcNAc...) asparagine" evidence="1">
    <location>
        <position position="627"/>
    </location>
</feature>
<feature type="glycosylation site" description="N-linked (GlcNAc...) asparagine" evidence="1">
    <location>
        <position position="646"/>
    </location>
</feature>
<accession>Q54F54</accession>
<dbReference type="EMBL" id="AAFI02000175">
    <property type="protein sequence ID" value="EAL61895.1"/>
    <property type="molecule type" value="Genomic_DNA"/>
</dbReference>
<dbReference type="RefSeq" id="XP_635400.1">
    <property type="nucleotide sequence ID" value="XM_630308.1"/>
</dbReference>
<dbReference type="SMR" id="Q54F54"/>
<dbReference type="FunCoup" id="Q54F54">
    <property type="interactions" value="2"/>
</dbReference>
<dbReference type="STRING" id="44689.Q54F54"/>
<dbReference type="GlyCosmos" id="Q54F54">
    <property type="glycosylation" value="18 sites, No reported glycans"/>
</dbReference>
<dbReference type="GlyGen" id="Q54F54">
    <property type="glycosylation" value="18 sites"/>
</dbReference>
<dbReference type="PaxDb" id="44689-DDB0231723"/>
<dbReference type="EnsemblProtists" id="EAL61895">
    <property type="protein sequence ID" value="EAL61895"/>
    <property type="gene ID" value="DDB_G0291095"/>
</dbReference>
<dbReference type="GeneID" id="8627984"/>
<dbReference type="KEGG" id="ddi:DDB_G0291095"/>
<dbReference type="dictyBase" id="DDB_G0291095">
    <property type="gene designation" value="grlP"/>
</dbReference>
<dbReference type="VEuPathDB" id="AmoebaDB:DDB_G0291095"/>
<dbReference type="eggNOG" id="KOG1055">
    <property type="taxonomic scope" value="Eukaryota"/>
</dbReference>
<dbReference type="HOGENOM" id="CLU_253936_0_0_1"/>
<dbReference type="InParanoid" id="Q54F54"/>
<dbReference type="OMA" id="KQFRIWR"/>
<dbReference type="PhylomeDB" id="Q54F54"/>
<dbReference type="Reactome" id="R-DDI-418594">
    <property type="pathway name" value="G alpha (i) signalling events"/>
</dbReference>
<dbReference type="Reactome" id="R-DDI-420499">
    <property type="pathway name" value="Class C/3 (Metabotropic glutamate/pheromone receptors)"/>
</dbReference>
<dbReference type="Reactome" id="R-DDI-977444">
    <property type="pathway name" value="GABA B receptor activation"/>
</dbReference>
<dbReference type="PRO" id="PR:Q54F54"/>
<dbReference type="Proteomes" id="UP000002195">
    <property type="component" value="Chromosome 5"/>
</dbReference>
<dbReference type="GO" id="GO:0038039">
    <property type="term" value="C:G protein-coupled receptor heterodimeric complex"/>
    <property type="evidence" value="ECO:0000318"/>
    <property type="project" value="GO_Central"/>
</dbReference>
<dbReference type="GO" id="GO:0004965">
    <property type="term" value="F:G protein-coupled GABA receptor activity"/>
    <property type="evidence" value="ECO:0000318"/>
    <property type="project" value="GO_Central"/>
</dbReference>
<dbReference type="GO" id="GO:0007214">
    <property type="term" value="P:gamma-aminobutyric acid signaling pathway"/>
    <property type="evidence" value="ECO:0000318"/>
    <property type="project" value="GO_Central"/>
</dbReference>
<dbReference type="CDD" id="cd15047">
    <property type="entry name" value="7tmC_GABA-B-like"/>
    <property type="match status" value="1"/>
</dbReference>
<dbReference type="Gene3D" id="2.160.20.10">
    <property type="entry name" value="Single-stranded right-handed beta-helix, Pectin lyase-like"/>
    <property type="match status" value="1"/>
</dbReference>
<dbReference type="InterPro" id="IPR017978">
    <property type="entry name" value="GPCR_3_C"/>
</dbReference>
<dbReference type="InterPro" id="IPR012334">
    <property type="entry name" value="Pectin_lyas_fold"/>
</dbReference>
<dbReference type="InterPro" id="IPR011050">
    <property type="entry name" value="Pectin_lyase_fold/virulence"/>
</dbReference>
<dbReference type="PANTHER" id="PTHR20916">
    <property type="entry name" value="CYSTEINE AND GLYCINE-RICH PROTEIN 2 BINDING PROTEIN"/>
    <property type="match status" value="1"/>
</dbReference>
<dbReference type="PANTHER" id="PTHR20916:SF18">
    <property type="entry name" value="IPT_TIG DOMAIN-CONTAINING PROTEIN"/>
    <property type="match status" value="1"/>
</dbReference>
<dbReference type="Pfam" id="PF00003">
    <property type="entry name" value="7tm_3"/>
    <property type="match status" value="1"/>
</dbReference>
<dbReference type="PRINTS" id="PR01176">
    <property type="entry name" value="GABABRECEPTR"/>
</dbReference>
<dbReference type="SUPFAM" id="SSF51126">
    <property type="entry name" value="Pectin lyase-like"/>
    <property type="match status" value="2"/>
</dbReference>
<dbReference type="PROSITE" id="PS50259">
    <property type="entry name" value="G_PROTEIN_RECEP_F3_4"/>
    <property type="match status" value="1"/>
</dbReference>
<reference key="1">
    <citation type="journal article" date="2005" name="Nature">
        <title>The genome of the social amoeba Dictyostelium discoideum.</title>
        <authorList>
            <person name="Eichinger L."/>
            <person name="Pachebat J.A."/>
            <person name="Gloeckner G."/>
            <person name="Rajandream M.A."/>
            <person name="Sucgang R."/>
            <person name="Berriman M."/>
            <person name="Song J."/>
            <person name="Olsen R."/>
            <person name="Szafranski K."/>
            <person name="Xu Q."/>
            <person name="Tunggal B."/>
            <person name="Kummerfeld S."/>
            <person name="Madera M."/>
            <person name="Konfortov B.A."/>
            <person name="Rivero F."/>
            <person name="Bankier A.T."/>
            <person name="Lehmann R."/>
            <person name="Hamlin N."/>
            <person name="Davies R."/>
            <person name="Gaudet P."/>
            <person name="Fey P."/>
            <person name="Pilcher K."/>
            <person name="Chen G."/>
            <person name="Saunders D."/>
            <person name="Sodergren E.J."/>
            <person name="Davis P."/>
            <person name="Kerhornou A."/>
            <person name="Nie X."/>
            <person name="Hall N."/>
            <person name="Anjard C."/>
            <person name="Hemphill L."/>
            <person name="Bason N."/>
            <person name="Farbrother P."/>
            <person name="Desany B."/>
            <person name="Just E."/>
            <person name="Morio T."/>
            <person name="Rost R."/>
            <person name="Churcher C.M."/>
            <person name="Cooper J."/>
            <person name="Haydock S."/>
            <person name="van Driessche N."/>
            <person name="Cronin A."/>
            <person name="Goodhead I."/>
            <person name="Muzny D.M."/>
            <person name="Mourier T."/>
            <person name="Pain A."/>
            <person name="Lu M."/>
            <person name="Harper D."/>
            <person name="Lindsay R."/>
            <person name="Hauser H."/>
            <person name="James K.D."/>
            <person name="Quiles M."/>
            <person name="Madan Babu M."/>
            <person name="Saito T."/>
            <person name="Buchrieser C."/>
            <person name="Wardroper A."/>
            <person name="Felder M."/>
            <person name="Thangavelu M."/>
            <person name="Johnson D."/>
            <person name="Knights A."/>
            <person name="Loulseged H."/>
            <person name="Mungall K.L."/>
            <person name="Oliver K."/>
            <person name="Price C."/>
            <person name="Quail M.A."/>
            <person name="Urushihara H."/>
            <person name="Hernandez J."/>
            <person name="Rabbinowitsch E."/>
            <person name="Steffen D."/>
            <person name="Sanders M."/>
            <person name="Ma J."/>
            <person name="Kohara Y."/>
            <person name="Sharp S."/>
            <person name="Simmonds M.N."/>
            <person name="Spiegler S."/>
            <person name="Tivey A."/>
            <person name="Sugano S."/>
            <person name="White B."/>
            <person name="Walker D."/>
            <person name="Woodward J.R."/>
            <person name="Winckler T."/>
            <person name="Tanaka Y."/>
            <person name="Shaulsky G."/>
            <person name="Schleicher M."/>
            <person name="Weinstock G.M."/>
            <person name="Rosenthal A."/>
            <person name="Cox E.C."/>
            <person name="Chisholm R.L."/>
            <person name="Gibbs R.A."/>
            <person name="Loomis W.F."/>
            <person name="Platzer M."/>
            <person name="Kay R.R."/>
            <person name="Williams J.G."/>
            <person name="Dear P.H."/>
            <person name="Noegel A.A."/>
            <person name="Barrell B.G."/>
            <person name="Kuspa A."/>
        </authorList>
    </citation>
    <scope>NUCLEOTIDE SEQUENCE [LARGE SCALE GENOMIC DNA]</scope>
    <source>
        <strain>AX4</strain>
    </source>
</reference>
<reference key="2">
    <citation type="journal article" date="2006" name="Eur. J. Cell Biol.">
        <title>The Dictyostelium repertoire of seven transmembrane domain receptors.</title>
        <authorList>
            <person name="Prabhu Y."/>
            <person name="Eichinger L."/>
        </authorList>
    </citation>
    <scope>NOMENCLATURE</scope>
</reference>
<reference key="3">
    <citation type="journal article" date="2007" name="BMC Dev. Biol.">
        <title>GrlJ, a Dictyostelium GABAB-like receptor with roles in post-aggregation development.</title>
        <authorList>
            <person name="Prabhu Y."/>
            <person name="Mueller R."/>
            <person name="Anjard C."/>
            <person name="Noegel A.A."/>
        </authorList>
    </citation>
    <scope>DEVELOPMENTAL STAGE</scope>
</reference>
<gene>
    <name type="primary">grlP</name>
    <name type="ORF">DDB_G0291095</name>
</gene>
<comment type="subcellular location">
    <subcellularLocation>
        <location evidence="4">Membrane</location>
        <topology evidence="4">Multi-pass membrane protein</topology>
    </subcellularLocation>
</comment>
<comment type="developmental stage">
    <text evidence="3">Increased levels found from the tight aggregation stage onward. Levels stayed high during late development. Clear expression at 24 hours when fruiting body formation is close to completion.</text>
</comment>
<comment type="similarity">
    <text evidence="4">Belongs to the G-protein coupled receptor 3 family. GABA-B receptor subfamily.</text>
</comment>
<proteinExistence type="evidence at transcript level"/>